<name>DER_ACTP7</name>
<organism>
    <name type="scientific">Actinobacillus pleuropneumoniae serotype 7 (strain AP76)</name>
    <dbReference type="NCBI Taxonomy" id="537457"/>
    <lineage>
        <taxon>Bacteria</taxon>
        <taxon>Pseudomonadati</taxon>
        <taxon>Pseudomonadota</taxon>
        <taxon>Gammaproteobacteria</taxon>
        <taxon>Pasteurellales</taxon>
        <taxon>Pasteurellaceae</taxon>
        <taxon>Actinobacillus</taxon>
    </lineage>
</organism>
<protein>
    <recommendedName>
        <fullName evidence="1">GTPase Der</fullName>
    </recommendedName>
    <alternativeName>
        <fullName evidence="1">GTP-binding protein EngA</fullName>
    </alternativeName>
</protein>
<evidence type="ECO:0000255" key="1">
    <source>
        <dbReference type="HAMAP-Rule" id="MF_00195"/>
    </source>
</evidence>
<comment type="function">
    <text evidence="1">GTPase that plays an essential role in the late steps of ribosome biogenesis.</text>
</comment>
<comment type="subunit">
    <text evidence="1">Associates with the 50S ribosomal subunit.</text>
</comment>
<comment type="similarity">
    <text evidence="1">Belongs to the TRAFAC class TrmE-Era-EngA-EngB-Septin-like GTPase superfamily. EngA (Der) GTPase family.</text>
</comment>
<keyword id="KW-0342">GTP-binding</keyword>
<keyword id="KW-0547">Nucleotide-binding</keyword>
<keyword id="KW-0677">Repeat</keyword>
<keyword id="KW-0690">Ribosome biogenesis</keyword>
<proteinExistence type="inferred from homology"/>
<sequence length="506" mass="56175">MTPVVALVGRPNVGKSTLFNRLTRTRDALVADFPGLTRDRKYGHANIAGYDFIVIDTGGIDGTEEGVEEKMAEQSLLAIEEADVVLFLVDARAGLVPADIGIAQYLRQREKTTVVVANKTDGIDADSHCAEFYQLGLGEVEQIAAAQGRGVTQLIDQVLAPLGEQLNADQAVENEENSANEEADEWDTDFDFENEDDTALLDEALEEETEESIEDKNIKIAIVGRPNVGKSTLTNRILGEERVVVYDMPGTTRDSIYIPMERDGQQYTIIDTAGVRKRGKVNLAVEKFSVIKTLQAIQDANVVLLTIDAREGISDQDLSLLGFILNAGRSLVIVVNKWDGLSQDIKDQVKSELDRRLDFIDFARVHFISALHGSGVGNLFDSVKEAYACATQKNSTSMLTRILRMAADEHQPPLVNGRRVKLKYAHPGGYNPPIIVIHGNQVEKLADSYKRYLSNYFRKSLKIIGSPIRIQFQEGNNPFAGKKNKLTPSQLRKRKRLMKFIKKSKK</sequence>
<dbReference type="EMBL" id="CP001091">
    <property type="protein sequence ID" value="ACE61079.1"/>
    <property type="molecule type" value="Genomic_DNA"/>
</dbReference>
<dbReference type="RefSeq" id="WP_005616842.1">
    <property type="nucleotide sequence ID" value="NC_010939.1"/>
</dbReference>
<dbReference type="SMR" id="B3H0R7"/>
<dbReference type="KEGG" id="apa:APP7_0427"/>
<dbReference type="HOGENOM" id="CLU_016077_5_1_6"/>
<dbReference type="Proteomes" id="UP000001226">
    <property type="component" value="Chromosome"/>
</dbReference>
<dbReference type="GO" id="GO:0016887">
    <property type="term" value="F:ATP hydrolysis activity"/>
    <property type="evidence" value="ECO:0007669"/>
    <property type="project" value="InterPro"/>
</dbReference>
<dbReference type="GO" id="GO:0005525">
    <property type="term" value="F:GTP binding"/>
    <property type="evidence" value="ECO:0007669"/>
    <property type="project" value="UniProtKB-UniRule"/>
</dbReference>
<dbReference type="GO" id="GO:0043022">
    <property type="term" value="F:ribosome binding"/>
    <property type="evidence" value="ECO:0007669"/>
    <property type="project" value="TreeGrafter"/>
</dbReference>
<dbReference type="GO" id="GO:0042254">
    <property type="term" value="P:ribosome biogenesis"/>
    <property type="evidence" value="ECO:0007669"/>
    <property type="project" value="UniProtKB-KW"/>
</dbReference>
<dbReference type="CDD" id="cd01894">
    <property type="entry name" value="EngA1"/>
    <property type="match status" value="1"/>
</dbReference>
<dbReference type="CDD" id="cd01895">
    <property type="entry name" value="EngA2"/>
    <property type="match status" value="1"/>
</dbReference>
<dbReference type="FunFam" id="3.30.300.20:FF:000004">
    <property type="entry name" value="GTPase Der"/>
    <property type="match status" value="1"/>
</dbReference>
<dbReference type="FunFam" id="3.40.50.300:FF:000040">
    <property type="entry name" value="GTPase Der"/>
    <property type="match status" value="1"/>
</dbReference>
<dbReference type="FunFam" id="3.40.50.300:FF:000057">
    <property type="entry name" value="GTPase Der"/>
    <property type="match status" value="1"/>
</dbReference>
<dbReference type="Gene3D" id="3.30.300.20">
    <property type="match status" value="1"/>
</dbReference>
<dbReference type="Gene3D" id="3.40.50.300">
    <property type="entry name" value="P-loop containing nucleotide triphosphate hydrolases"/>
    <property type="match status" value="2"/>
</dbReference>
<dbReference type="HAMAP" id="MF_00195">
    <property type="entry name" value="GTPase_Der"/>
    <property type="match status" value="1"/>
</dbReference>
<dbReference type="InterPro" id="IPR003593">
    <property type="entry name" value="AAA+_ATPase"/>
</dbReference>
<dbReference type="InterPro" id="IPR031166">
    <property type="entry name" value="G_ENGA"/>
</dbReference>
<dbReference type="InterPro" id="IPR006073">
    <property type="entry name" value="GTP-bd"/>
</dbReference>
<dbReference type="InterPro" id="IPR016484">
    <property type="entry name" value="GTPase_Der"/>
</dbReference>
<dbReference type="InterPro" id="IPR032859">
    <property type="entry name" value="KH_dom-like"/>
</dbReference>
<dbReference type="InterPro" id="IPR015946">
    <property type="entry name" value="KH_dom-like_a/b"/>
</dbReference>
<dbReference type="InterPro" id="IPR027417">
    <property type="entry name" value="P-loop_NTPase"/>
</dbReference>
<dbReference type="InterPro" id="IPR005225">
    <property type="entry name" value="Small_GTP-bd"/>
</dbReference>
<dbReference type="NCBIfam" id="TIGR03594">
    <property type="entry name" value="GTPase_EngA"/>
    <property type="match status" value="1"/>
</dbReference>
<dbReference type="NCBIfam" id="TIGR00231">
    <property type="entry name" value="small_GTP"/>
    <property type="match status" value="2"/>
</dbReference>
<dbReference type="PANTHER" id="PTHR43834">
    <property type="entry name" value="GTPASE DER"/>
    <property type="match status" value="1"/>
</dbReference>
<dbReference type="PANTHER" id="PTHR43834:SF6">
    <property type="entry name" value="GTPASE DER"/>
    <property type="match status" value="1"/>
</dbReference>
<dbReference type="Pfam" id="PF14714">
    <property type="entry name" value="KH_dom-like"/>
    <property type="match status" value="1"/>
</dbReference>
<dbReference type="Pfam" id="PF01926">
    <property type="entry name" value="MMR_HSR1"/>
    <property type="match status" value="2"/>
</dbReference>
<dbReference type="PIRSF" id="PIRSF006485">
    <property type="entry name" value="GTP-binding_EngA"/>
    <property type="match status" value="1"/>
</dbReference>
<dbReference type="PRINTS" id="PR00326">
    <property type="entry name" value="GTP1OBG"/>
</dbReference>
<dbReference type="SMART" id="SM00382">
    <property type="entry name" value="AAA"/>
    <property type="match status" value="2"/>
</dbReference>
<dbReference type="SUPFAM" id="SSF52540">
    <property type="entry name" value="P-loop containing nucleoside triphosphate hydrolases"/>
    <property type="match status" value="2"/>
</dbReference>
<dbReference type="PROSITE" id="PS51712">
    <property type="entry name" value="G_ENGA"/>
    <property type="match status" value="2"/>
</dbReference>
<accession>B3H0R7</accession>
<gene>
    <name evidence="1" type="primary">der</name>
    <name type="synonym">engA</name>
    <name type="ordered locus">APP7_0427</name>
</gene>
<reference key="1">
    <citation type="submission" date="2008-06" db="EMBL/GenBank/DDBJ databases">
        <title>Genome and proteome analysis of A. pleuropneumoniae serotype 7.</title>
        <authorList>
            <person name="Linke B."/>
            <person name="Buettner F."/>
            <person name="Martinez-Arias R."/>
            <person name="Goesmann A."/>
            <person name="Baltes N."/>
            <person name="Tegetmeyer H."/>
            <person name="Singh M."/>
            <person name="Gerlach G.F."/>
        </authorList>
    </citation>
    <scope>NUCLEOTIDE SEQUENCE [LARGE SCALE GENOMIC DNA]</scope>
    <source>
        <strain>AP76</strain>
    </source>
</reference>
<feature type="chain" id="PRO_1000099084" description="GTPase Der">
    <location>
        <begin position="1"/>
        <end position="506"/>
    </location>
</feature>
<feature type="domain" description="EngA-type G 1">
    <location>
        <begin position="3"/>
        <end position="166"/>
    </location>
</feature>
<feature type="domain" description="EngA-type G 2">
    <location>
        <begin position="218"/>
        <end position="391"/>
    </location>
</feature>
<feature type="domain" description="KH-like" evidence="1">
    <location>
        <begin position="392"/>
        <end position="476"/>
    </location>
</feature>
<feature type="binding site" evidence="1">
    <location>
        <begin position="9"/>
        <end position="16"/>
    </location>
    <ligand>
        <name>GTP</name>
        <dbReference type="ChEBI" id="CHEBI:37565"/>
        <label>1</label>
    </ligand>
</feature>
<feature type="binding site" evidence="1">
    <location>
        <begin position="56"/>
        <end position="60"/>
    </location>
    <ligand>
        <name>GTP</name>
        <dbReference type="ChEBI" id="CHEBI:37565"/>
        <label>1</label>
    </ligand>
</feature>
<feature type="binding site" evidence="1">
    <location>
        <begin position="118"/>
        <end position="121"/>
    </location>
    <ligand>
        <name>GTP</name>
        <dbReference type="ChEBI" id="CHEBI:37565"/>
        <label>1</label>
    </ligand>
</feature>
<feature type="binding site" evidence="1">
    <location>
        <begin position="224"/>
        <end position="231"/>
    </location>
    <ligand>
        <name>GTP</name>
        <dbReference type="ChEBI" id="CHEBI:37565"/>
        <label>2</label>
    </ligand>
</feature>
<feature type="binding site" evidence="1">
    <location>
        <begin position="271"/>
        <end position="275"/>
    </location>
    <ligand>
        <name>GTP</name>
        <dbReference type="ChEBI" id="CHEBI:37565"/>
        <label>2</label>
    </ligand>
</feature>
<feature type="binding site" evidence="1">
    <location>
        <begin position="336"/>
        <end position="339"/>
    </location>
    <ligand>
        <name>GTP</name>
        <dbReference type="ChEBI" id="CHEBI:37565"/>
        <label>2</label>
    </ligand>
</feature>